<feature type="initiator methionine" description="Removed" evidence="1">
    <location>
        <position position="1"/>
    </location>
</feature>
<feature type="chain" id="PRO_0000425716" description="Alcohol oxidase 2">
    <location>
        <begin position="2"/>
        <end position="663"/>
    </location>
</feature>
<feature type="short sequence motif" description="Microbody targeting signal" evidence="3">
    <location>
        <begin position="661"/>
        <end position="663"/>
    </location>
</feature>
<feature type="active site" description="Proton acceptor" evidence="2">
    <location>
        <position position="567"/>
    </location>
</feature>
<feature type="binding site" evidence="1">
    <location>
        <begin position="8"/>
        <end position="38"/>
    </location>
    <ligand>
        <name>FAD</name>
        <dbReference type="ChEBI" id="CHEBI:57692"/>
    </ligand>
</feature>
<feature type="sequence conflict" description="In Ref. 1; AAB57850." evidence="5" ref="1">
    <original>K</original>
    <variation>T</variation>
    <location>
        <position position="262"/>
    </location>
</feature>
<evidence type="ECO:0000250" key="1"/>
<evidence type="ECO:0000250" key="2">
    <source>
        <dbReference type="UniProtKB" id="E4QP00"/>
    </source>
</evidence>
<evidence type="ECO:0000255" key="3"/>
<evidence type="ECO:0000269" key="4">
    <source>
    </source>
</evidence>
<evidence type="ECO:0000305" key="5"/>
<name>ALOX2_KOMPC</name>
<gene>
    <name type="primary">AOX2</name>
    <name type="ordered locus">PP7435_Chr4-0863</name>
</gene>
<proteinExistence type="evidence at transcript level"/>
<accession>F2R038</accession>
<accession>Q9URI7</accession>
<protein>
    <recommendedName>
        <fullName>Alcohol oxidase 2</fullName>
        <shortName>AO 2</shortName>
        <shortName>AOX 2</shortName>
        <ecNumber>1.1.3.13</ecNumber>
    </recommendedName>
    <alternativeName>
        <fullName>Methanol oxidase 2</fullName>
        <shortName>MOX 2</shortName>
    </alternativeName>
</protein>
<keyword id="KW-0274">FAD</keyword>
<keyword id="KW-0285">Flavoprotein</keyword>
<keyword id="KW-0485">Methanol utilization</keyword>
<keyword id="KW-0560">Oxidoreductase</keyword>
<keyword id="KW-0576">Peroxisome</keyword>
<sequence length="663" mass="73952">MAIPEEFDILVLGGGSSGSCIAGRLANLDHSLKVGLIEAGENNLNNPWVYLPGIYPRNMKLDSKTASFYTSNPSPHLNGRRAIVPCANILGGGSSINFMMYTRGSASDYDDFEAEGWKTKDLLPLMKKTETYQRACNNPEIHGFEGPIKVSFGNYTYPVCQDFLRATESQGIPYVDDLEDLVTAHGAEHWLKWINRDTGRRSDSAHAFVHSTMRNHDNLYLICNTKVDKIIVEDGRAAAVRTVPSKPLNAKKPTHKVYRARKQIVLSCGTISSPLVLQRSGFGDPIKLRAAGVKPLVNLPGVGRNFQDHYCFFSPYRIKPQYESFDDFVRGDANIQKKVFDQWYANGTGPLATNGIEAGVKIRPTPEELSQMDESFQEGYREYFEDKPDKPVMHYSIIAGFFGDHTKIPPGKYMTMFHFLEYPFSRGSIHITSPDPYATPDFDPGFMNDERDMAPMVWSYKKSRETARKMDHFAGEVTSHHPLFPYSSEARAYEMDLETSNAYGGPLNLTAGLAHGSWTQPLKKPAGRNEGHVTSNQVELHPDIEYDEEDDKAIENYIREHTETTWHCLGTCSIGPREGSKIVKWGGVLDHRSNVYGVKGLKVGDLSVCPDNVGCNTYTTALLIGEKTATLVGEDLGYTGEALDMTVPQFKLGTYEKTGLARF</sequence>
<comment type="function">
    <text evidence="4">Minor isoform of alcohol oxidase, which catalyzes the oxidation of methanol to formaldehyde and hydrogen peroxide, the first step in the methanol utilization pathway of methylotrophic yeasts.</text>
</comment>
<comment type="catalytic activity">
    <reaction>
        <text>a primary alcohol + O2 = an aldehyde + H2O2</text>
        <dbReference type="Rhea" id="RHEA:19829"/>
        <dbReference type="ChEBI" id="CHEBI:15379"/>
        <dbReference type="ChEBI" id="CHEBI:15734"/>
        <dbReference type="ChEBI" id="CHEBI:16240"/>
        <dbReference type="ChEBI" id="CHEBI:17478"/>
        <dbReference type="EC" id="1.1.3.13"/>
    </reaction>
</comment>
<comment type="cofactor">
    <cofactor evidence="1">
        <name>FAD</name>
        <dbReference type="ChEBI" id="CHEBI:57692"/>
    </cofactor>
</comment>
<comment type="pathway">
    <text>Energy metabolism; methane degradation.</text>
</comment>
<comment type="subunit">
    <text evidence="1">Homooctamer.</text>
</comment>
<comment type="subcellular location">
    <subcellularLocation>
        <location evidence="1">Peroxisome matrix</location>
    </subcellularLocation>
</comment>
<comment type="induction">
    <text evidence="4">Induced by methanol. Subject to strong carbon catabolite repression.</text>
</comment>
<comment type="domain">
    <text evidence="1">The C-terminal peroxisomal targeting signal (PTS) is essential for the efficient targeting and import of AOX into peroxisomes via the PTS1 pathway.</text>
</comment>
<comment type="similarity">
    <text evidence="5">Belongs to the GMC oxidoreductase family.</text>
</comment>
<dbReference type="EC" id="1.1.3.13"/>
<dbReference type="EMBL" id="U96968">
    <property type="protein sequence ID" value="AAB57850.1"/>
    <property type="molecule type" value="Genomic_DNA"/>
</dbReference>
<dbReference type="EMBL" id="FR839631">
    <property type="protein sequence ID" value="CCA41016.1"/>
    <property type="molecule type" value="Genomic_DNA"/>
</dbReference>
<dbReference type="SMR" id="F2R038"/>
<dbReference type="CAZy" id="AA3">
    <property type="family name" value="Auxiliary Activities 3"/>
</dbReference>
<dbReference type="HOGENOM" id="CLU_002865_5_1_1"/>
<dbReference type="BRENDA" id="1.1.3.13">
    <property type="organism ID" value="4827"/>
</dbReference>
<dbReference type="UniPathway" id="UPA00147"/>
<dbReference type="Proteomes" id="UP000006853">
    <property type="component" value="Chromosome 4"/>
</dbReference>
<dbReference type="GO" id="GO:0005782">
    <property type="term" value="C:peroxisomal matrix"/>
    <property type="evidence" value="ECO:0007669"/>
    <property type="project" value="UniProtKB-SubCell"/>
</dbReference>
<dbReference type="GO" id="GO:0047639">
    <property type="term" value="F:alcohol oxidase activity"/>
    <property type="evidence" value="ECO:0007669"/>
    <property type="project" value="UniProtKB-EC"/>
</dbReference>
<dbReference type="GO" id="GO:0050660">
    <property type="term" value="F:flavin adenine dinucleotide binding"/>
    <property type="evidence" value="ECO:0007669"/>
    <property type="project" value="InterPro"/>
</dbReference>
<dbReference type="GO" id="GO:0046188">
    <property type="term" value="P:methane catabolic process"/>
    <property type="evidence" value="ECO:0007669"/>
    <property type="project" value="UniProtKB-UniPathway"/>
</dbReference>
<dbReference type="GO" id="GO:0015945">
    <property type="term" value="P:methanol metabolic process"/>
    <property type="evidence" value="ECO:0007669"/>
    <property type="project" value="UniProtKB-KW"/>
</dbReference>
<dbReference type="Gene3D" id="3.50.50.60">
    <property type="entry name" value="FAD/NAD(P)-binding domain"/>
    <property type="match status" value="2"/>
</dbReference>
<dbReference type="Gene3D" id="3.30.560.10">
    <property type="entry name" value="Glucose Oxidase, domain 3"/>
    <property type="match status" value="1"/>
</dbReference>
<dbReference type="InterPro" id="IPR036188">
    <property type="entry name" value="FAD/NAD-bd_sf"/>
</dbReference>
<dbReference type="InterPro" id="IPR012132">
    <property type="entry name" value="GMC_OxRdtase"/>
</dbReference>
<dbReference type="InterPro" id="IPR000172">
    <property type="entry name" value="GMC_OxRdtase_N"/>
</dbReference>
<dbReference type="InterPro" id="IPR007867">
    <property type="entry name" value="GMC_OxRtase_C"/>
</dbReference>
<dbReference type="PANTHER" id="PTHR11552">
    <property type="entry name" value="GLUCOSE-METHANOL-CHOLINE GMC OXIDOREDUCTASE"/>
    <property type="match status" value="1"/>
</dbReference>
<dbReference type="PANTHER" id="PTHR11552:SF119">
    <property type="entry name" value="GLUCOSE-METHANOL-CHOLINE OXIDOREDUCTASE N-TERMINAL DOMAIN-CONTAINING PROTEIN"/>
    <property type="match status" value="1"/>
</dbReference>
<dbReference type="Pfam" id="PF05199">
    <property type="entry name" value="GMC_oxred_C"/>
    <property type="match status" value="1"/>
</dbReference>
<dbReference type="Pfam" id="PF00732">
    <property type="entry name" value="GMC_oxred_N"/>
    <property type="match status" value="1"/>
</dbReference>
<dbReference type="PIRSF" id="PIRSF000137">
    <property type="entry name" value="Alcohol_oxidase"/>
    <property type="match status" value="1"/>
</dbReference>
<dbReference type="SUPFAM" id="SSF54373">
    <property type="entry name" value="FAD-linked reductases, C-terminal domain"/>
    <property type="match status" value="1"/>
</dbReference>
<dbReference type="SUPFAM" id="SSF51905">
    <property type="entry name" value="FAD/NAD(P)-binding domain"/>
    <property type="match status" value="1"/>
</dbReference>
<dbReference type="PROSITE" id="PS00623">
    <property type="entry name" value="GMC_OXRED_1"/>
    <property type="match status" value="1"/>
</dbReference>
<organism>
    <name type="scientific">Komagataella phaffii (strain ATCC 76273 / CBS 7435 / CECT 11047 / NRRL Y-11430 / Wegner 21-1)</name>
    <name type="common">Yeast</name>
    <name type="synonym">Pichia pastoris</name>
    <dbReference type="NCBI Taxonomy" id="981350"/>
    <lineage>
        <taxon>Eukaryota</taxon>
        <taxon>Fungi</taxon>
        <taxon>Dikarya</taxon>
        <taxon>Ascomycota</taxon>
        <taxon>Saccharomycotina</taxon>
        <taxon>Pichiomycetes</taxon>
        <taxon>Pichiales</taxon>
        <taxon>Pichiaceae</taxon>
        <taxon>Komagataella</taxon>
    </lineage>
</organism>
<reference key="1">
    <citation type="journal article" date="1989" name="Yeast">
        <title>Structural comparison of the Pichia pastoris alcohol oxidase genes.</title>
        <authorList>
            <person name="Koutz P."/>
            <person name="Davis G.R."/>
            <person name="Stillman C."/>
            <person name="Barringer K."/>
            <person name="Cregg J."/>
            <person name="Thill G."/>
        </authorList>
    </citation>
    <scope>NUCLEOTIDE SEQUENCE [GENOMIC DNA]</scope>
    <source>
        <strain>NRRL Y-11430</strain>
    </source>
</reference>
<reference key="2">
    <citation type="journal article" date="2011" name="J. Biotechnol.">
        <title>High-quality genome sequence of Pichia pastoris CBS7435.</title>
        <authorList>
            <person name="Kueberl A."/>
            <person name="Schneider J."/>
            <person name="Thallinger G.G."/>
            <person name="Anderl I."/>
            <person name="Wibberg D."/>
            <person name="Hajek T."/>
            <person name="Jaenicke S."/>
            <person name="Brinkrolf K."/>
            <person name="Goesmann A."/>
            <person name="Szczepanowski R."/>
            <person name="Puehler A."/>
            <person name="Schwab H."/>
            <person name="Glieder A."/>
            <person name="Pichler H."/>
        </authorList>
    </citation>
    <scope>NUCLEOTIDE SEQUENCE [LARGE SCALE GENOMIC DNA]</scope>
    <source>
        <strain>ATCC 76273 / CBS 7435 / CECT 11047 / NRRL Y-11430 / Wegner 21-1</strain>
    </source>
</reference>
<reference key="3">
    <citation type="journal article" date="2016" name="FEMS Yeast Res.">
        <title>Curation of the genome annotation of Pichia pastoris (Komagataella phaffii) CBS7435 from gene level to protein function.</title>
        <authorList>
            <person name="Valli M."/>
            <person name="Tatto N.E."/>
            <person name="Peymann A."/>
            <person name="Gruber C."/>
            <person name="Landes N."/>
            <person name="Ekker H."/>
            <person name="Thallinger G.G."/>
            <person name="Mattanovich D."/>
            <person name="Gasser B."/>
            <person name="Graf A.B."/>
        </authorList>
    </citation>
    <scope>GENOME REANNOTATION</scope>
    <source>
        <strain>ATCC 76273 / CBS 7435 / CECT 11047 / NRRL Y-11430 / Wegner 21-1</strain>
    </source>
</reference>
<reference key="4">
    <citation type="journal article" date="1989" name="Mol. Cell. Biol.">
        <title>Functional characterization of the two alcohol oxidase genes from the yeast Pichia pastoris.</title>
        <authorList>
            <person name="Cregg J.M."/>
            <person name="Madden K.R."/>
            <person name="Barringer K.J."/>
            <person name="Thill G.P."/>
            <person name="Stillman C.A."/>
        </authorList>
    </citation>
    <scope>FUNCTION</scope>
    <scope>INDUCTION BY METHANOL</scope>
    <source>
        <strain>ATCC 76273 / CBS 7435 / CECT 11047 / NRRL Y-11430 / Wegner 21-1</strain>
    </source>
</reference>